<protein>
    <recommendedName>
        <fullName evidence="1">Bifunctional purine biosynthesis protein PurH</fullName>
    </recommendedName>
    <domain>
        <recommendedName>
            <fullName evidence="1">Phosphoribosylaminoimidazolecarboxamide formyltransferase</fullName>
            <ecNumber evidence="1">2.1.2.3</ecNumber>
        </recommendedName>
        <alternativeName>
            <fullName evidence="1">AICAR transformylase</fullName>
        </alternativeName>
    </domain>
    <domain>
        <recommendedName>
            <fullName evidence="1">IMP cyclohydrolase</fullName>
            <ecNumber evidence="1">3.5.4.10</ecNumber>
        </recommendedName>
        <alternativeName>
            <fullName evidence="1">ATIC</fullName>
        </alternativeName>
        <alternativeName>
            <fullName evidence="1">IMP synthase</fullName>
        </alternativeName>
        <alternativeName>
            <fullName evidence="1">Inosinicase</fullName>
        </alternativeName>
    </domain>
</protein>
<proteinExistence type="inferred from homology"/>
<feature type="chain" id="PRO_1000018986" description="Bifunctional purine biosynthesis protein PurH">
    <location>
        <begin position="1"/>
        <end position="527"/>
    </location>
</feature>
<feature type="domain" description="MGS-like" evidence="2">
    <location>
        <begin position="1"/>
        <end position="149"/>
    </location>
</feature>
<gene>
    <name evidence="1" type="primary">purH</name>
    <name type="ordered locus">XCV0547</name>
</gene>
<dbReference type="EC" id="2.1.2.3" evidence="1"/>
<dbReference type="EC" id="3.5.4.10" evidence="1"/>
<dbReference type="EMBL" id="AM039952">
    <property type="protein sequence ID" value="CAJ22178.1"/>
    <property type="molecule type" value="Genomic_DNA"/>
</dbReference>
<dbReference type="RefSeq" id="WP_011346196.1">
    <property type="nucleotide sequence ID" value="NZ_CP017190.1"/>
</dbReference>
<dbReference type="SMR" id="Q3BY85"/>
<dbReference type="STRING" id="456327.BJD11_20135"/>
<dbReference type="KEGG" id="xcv:XCV0547"/>
<dbReference type="eggNOG" id="COG0138">
    <property type="taxonomic scope" value="Bacteria"/>
</dbReference>
<dbReference type="HOGENOM" id="CLU_016316_5_2_6"/>
<dbReference type="UniPathway" id="UPA00074">
    <property type="reaction ID" value="UER00133"/>
</dbReference>
<dbReference type="UniPathway" id="UPA00074">
    <property type="reaction ID" value="UER00135"/>
</dbReference>
<dbReference type="Proteomes" id="UP000007069">
    <property type="component" value="Chromosome"/>
</dbReference>
<dbReference type="GO" id="GO:0005829">
    <property type="term" value="C:cytosol"/>
    <property type="evidence" value="ECO:0007669"/>
    <property type="project" value="TreeGrafter"/>
</dbReference>
<dbReference type="GO" id="GO:0003937">
    <property type="term" value="F:IMP cyclohydrolase activity"/>
    <property type="evidence" value="ECO:0007669"/>
    <property type="project" value="UniProtKB-UniRule"/>
</dbReference>
<dbReference type="GO" id="GO:0004643">
    <property type="term" value="F:phosphoribosylaminoimidazolecarboxamide formyltransferase activity"/>
    <property type="evidence" value="ECO:0007669"/>
    <property type="project" value="UniProtKB-UniRule"/>
</dbReference>
<dbReference type="GO" id="GO:0006189">
    <property type="term" value="P:'de novo' IMP biosynthetic process"/>
    <property type="evidence" value="ECO:0007669"/>
    <property type="project" value="UniProtKB-UniRule"/>
</dbReference>
<dbReference type="CDD" id="cd01421">
    <property type="entry name" value="IMPCH"/>
    <property type="match status" value="1"/>
</dbReference>
<dbReference type="FunFam" id="3.40.140.20:FF:000001">
    <property type="entry name" value="Bifunctional purine biosynthesis protein PurH"/>
    <property type="match status" value="1"/>
</dbReference>
<dbReference type="FunFam" id="3.40.140.20:FF:000002">
    <property type="entry name" value="Bifunctional purine biosynthesis protein PurH"/>
    <property type="match status" value="1"/>
</dbReference>
<dbReference type="FunFam" id="3.40.50.1380:FF:000001">
    <property type="entry name" value="Bifunctional purine biosynthesis protein PurH"/>
    <property type="match status" value="1"/>
</dbReference>
<dbReference type="Gene3D" id="3.40.140.20">
    <property type="match status" value="2"/>
</dbReference>
<dbReference type="Gene3D" id="3.40.50.1380">
    <property type="entry name" value="Methylglyoxal synthase-like domain"/>
    <property type="match status" value="1"/>
</dbReference>
<dbReference type="HAMAP" id="MF_00139">
    <property type="entry name" value="PurH"/>
    <property type="match status" value="1"/>
</dbReference>
<dbReference type="InterPro" id="IPR024051">
    <property type="entry name" value="AICAR_Tfase_dup_dom_sf"/>
</dbReference>
<dbReference type="InterPro" id="IPR016193">
    <property type="entry name" value="Cytidine_deaminase-like"/>
</dbReference>
<dbReference type="InterPro" id="IPR011607">
    <property type="entry name" value="MGS-like_dom"/>
</dbReference>
<dbReference type="InterPro" id="IPR036914">
    <property type="entry name" value="MGS-like_dom_sf"/>
</dbReference>
<dbReference type="InterPro" id="IPR002695">
    <property type="entry name" value="PurH-like"/>
</dbReference>
<dbReference type="NCBIfam" id="NF002049">
    <property type="entry name" value="PRK00881.1"/>
    <property type="match status" value="1"/>
</dbReference>
<dbReference type="NCBIfam" id="TIGR00355">
    <property type="entry name" value="purH"/>
    <property type="match status" value="1"/>
</dbReference>
<dbReference type="PANTHER" id="PTHR11692:SF0">
    <property type="entry name" value="BIFUNCTIONAL PURINE BIOSYNTHESIS PROTEIN ATIC"/>
    <property type="match status" value="1"/>
</dbReference>
<dbReference type="PANTHER" id="PTHR11692">
    <property type="entry name" value="BIFUNCTIONAL PURINE BIOSYNTHESIS PROTEIN PURH"/>
    <property type="match status" value="1"/>
</dbReference>
<dbReference type="Pfam" id="PF01808">
    <property type="entry name" value="AICARFT_IMPCHas"/>
    <property type="match status" value="1"/>
</dbReference>
<dbReference type="Pfam" id="PF02142">
    <property type="entry name" value="MGS"/>
    <property type="match status" value="1"/>
</dbReference>
<dbReference type="PIRSF" id="PIRSF000414">
    <property type="entry name" value="AICARFT_IMPCHas"/>
    <property type="match status" value="1"/>
</dbReference>
<dbReference type="SMART" id="SM00798">
    <property type="entry name" value="AICARFT_IMPCHas"/>
    <property type="match status" value="1"/>
</dbReference>
<dbReference type="SMART" id="SM00851">
    <property type="entry name" value="MGS"/>
    <property type="match status" value="1"/>
</dbReference>
<dbReference type="SUPFAM" id="SSF53927">
    <property type="entry name" value="Cytidine deaminase-like"/>
    <property type="match status" value="1"/>
</dbReference>
<dbReference type="SUPFAM" id="SSF52335">
    <property type="entry name" value="Methylglyoxal synthase-like"/>
    <property type="match status" value="1"/>
</dbReference>
<dbReference type="PROSITE" id="PS51855">
    <property type="entry name" value="MGS"/>
    <property type="match status" value="1"/>
</dbReference>
<accession>Q3BY85</accession>
<reference key="1">
    <citation type="journal article" date="2005" name="J. Bacteriol.">
        <title>Insights into genome plasticity and pathogenicity of the plant pathogenic Bacterium Xanthomonas campestris pv. vesicatoria revealed by the complete genome sequence.</title>
        <authorList>
            <person name="Thieme F."/>
            <person name="Koebnik R."/>
            <person name="Bekel T."/>
            <person name="Berger C."/>
            <person name="Boch J."/>
            <person name="Buettner D."/>
            <person name="Caldana C."/>
            <person name="Gaigalat L."/>
            <person name="Goesmann A."/>
            <person name="Kay S."/>
            <person name="Kirchner O."/>
            <person name="Lanz C."/>
            <person name="Linke B."/>
            <person name="McHardy A.C."/>
            <person name="Meyer F."/>
            <person name="Mittenhuber G."/>
            <person name="Nies D.H."/>
            <person name="Niesbach-Kloesgen U."/>
            <person name="Patschkowski T."/>
            <person name="Rueckert C."/>
            <person name="Rupp O."/>
            <person name="Schneiker S."/>
            <person name="Schuster S.C."/>
            <person name="Vorhoelter F.J."/>
            <person name="Weber E."/>
            <person name="Puehler A."/>
            <person name="Bonas U."/>
            <person name="Bartels D."/>
            <person name="Kaiser O."/>
        </authorList>
    </citation>
    <scope>NUCLEOTIDE SEQUENCE [LARGE SCALE GENOMIC DNA]</scope>
    <source>
        <strain>85-10</strain>
    </source>
</reference>
<evidence type="ECO:0000255" key="1">
    <source>
        <dbReference type="HAMAP-Rule" id="MF_00139"/>
    </source>
</evidence>
<evidence type="ECO:0000255" key="2">
    <source>
        <dbReference type="PROSITE-ProRule" id="PRU01202"/>
    </source>
</evidence>
<comment type="catalytic activity">
    <reaction evidence="1">
        <text>(6R)-10-formyltetrahydrofolate + 5-amino-1-(5-phospho-beta-D-ribosyl)imidazole-4-carboxamide = 5-formamido-1-(5-phospho-D-ribosyl)imidazole-4-carboxamide + (6S)-5,6,7,8-tetrahydrofolate</text>
        <dbReference type="Rhea" id="RHEA:22192"/>
        <dbReference type="ChEBI" id="CHEBI:57453"/>
        <dbReference type="ChEBI" id="CHEBI:58467"/>
        <dbReference type="ChEBI" id="CHEBI:58475"/>
        <dbReference type="ChEBI" id="CHEBI:195366"/>
        <dbReference type="EC" id="2.1.2.3"/>
    </reaction>
</comment>
<comment type="catalytic activity">
    <reaction evidence="1">
        <text>IMP + H2O = 5-formamido-1-(5-phospho-D-ribosyl)imidazole-4-carboxamide</text>
        <dbReference type="Rhea" id="RHEA:18445"/>
        <dbReference type="ChEBI" id="CHEBI:15377"/>
        <dbReference type="ChEBI" id="CHEBI:58053"/>
        <dbReference type="ChEBI" id="CHEBI:58467"/>
        <dbReference type="EC" id="3.5.4.10"/>
    </reaction>
</comment>
<comment type="pathway">
    <text evidence="1">Purine metabolism; IMP biosynthesis via de novo pathway; 5-formamido-1-(5-phospho-D-ribosyl)imidazole-4-carboxamide from 5-amino-1-(5-phospho-D-ribosyl)imidazole-4-carboxamide (10-formyl THF route): step 1/1.</text>
</comment>
<comment type="pathway">
    <text evidence="1">Purine metabolism; IMP biosynthesis via de novo pathway; IMP from 5-formamido-1-(5-phospho-D-ribosyl)imidazole-4-carboxamide: step 1/1.</text>
</comment>
<comment type="domain">
    <text evidence="1">The IMP cyclohydrolase activity resides in the N-terminal region.</text>
</comment>
<comment type="similarity">
    <text evidence="1">Belongs to the PurH family.</text>
</comment>
<sequence length="527" mass="55788">MASDFLPVRRALLSVSDKTGLIDLARALVARNVELLSTGGTAKAIREAGLPVKDVAELTGFPEMMDGRVKTLHPLVHGGLLGRAGVDEAVMAEHGIVPIDLLVLNLYPFESVTVKADCTLADAVENIDIGGPAMLRSAAKNFARVAVATDPAQYADLLAELEVNDGQLSAAKRFALSVAAFNRVAQYDAAISNYLSAVADSSEAVPTRSPFPAQINSNFVKVMDLRYGENPHQSGAFYRDLYPVPGTLATFQQLQGKELSYNNLADADAAWECVRQFDAPACVIVKHANPCGVAVGAGCGDAYELAYATDPTSAFGGILAFNKTLDAATAKAILDRQFVEVLIAPDYEAGALEYATRKANVRVLKIPHGNGLNNYDTKRIGSGLLMQSADNRSMSLGELSVVTQRAPNEAELGDLLFAWRVAKYVKSNAIVYAKDSRTIGVGAGQMSRVVSAKIAALKAEEAKLTVAGSVMASDAFFPFRDGIDAAAAAGIKAVIQPGGSMRDGEVIAAADEHGIAMVFTGVRHFRH</sequence>
<organism>
    <name type="scientific">Xanthomonas euvesicatoria pv. vesicatoria (strain 85-10)</name>
    <name type="common">Xanthomonas campestris pv. vesicatoria</name>
    <dbReference type="NCBI Taxonomy" id="316273"/>
    <lineage>
        <taxon>Bacteria</taxon>
        <taxon>Pseudomonadati</taxon>
        <taxon>Pseudomonadota</taxon>
        <taxon>Gammaproteobacteria</taxon>
        <taxon>Lysobacterales</taxon>
        <taxon>Lysobacteraceae</taxon>
        <taxon>Xanthomonas</taxon>
    </lineage>
</organism>
<keyword id="KW-0378">Hydrolase</keyword>
<keyword id="KW-0511">Multifunctional enzyme</keyword>
<keyword id="KW-0658">Purine biosynthesis</keyword>
<keyword id="KW-0808">Transferase</keyword>
<name>PUR9_XANE5</name>